<protein>
    <recommendedName>
        <fullName evidence="1">DNA-directed RNA polymerase subunit alpha</fullName>
        <shortName evidence="1">RNAP subunit alpha</shortName>
        <ecNumber evidence="1">2.7.7.6</ecNumber>
    </recommendedName>
    <alternativeName>
        <fullName evidence="1">RNA polymerase subunit alpha</fullName>
    </alternativeName>
    <alternativeName>
        <fullName evidence="1">Transcriptase subunit alpha</fullName>
    </alternativeName>
</protein>
<proteinExistence type="inferred from homology"/>
<comment type="function">
    <text evidence="1">DNA-dependent RNA polymerase catalyzes the transcription of DNA into RNA using the four ribonucleoside triphosphates as substrates.</text>
</comment>
<comment type="catalytic activity">
    <reaction evidence="1">
        <text>RNA(n) + a ribonucleoside 5'-triphosphate = RNA(n+1) + diphosphate</text>
        <dbReference type="Rhea" id="RHEA:21248"/>
        <dbReference type="Rhea" id="RHEA-COMP:14527"/>
        <dbReference type="Rhea" id="RHEA-COMP:17342"/>
        <dbReference type="ChEBI" id="CHEBI:33019"/>
        <dbReference type="ChEBI" id="CHEBI:61557"/>
        <dbReference type="ChEBI" id="CHEBI:140395"/>
        <dbReference type="EC" id="2.7.7.6"/>
    </reaction>
</comment>
<comment type="subunit">
    <text evidence="1">Homodimer. The RNAP catalytic core consists of 2 alpha, 1 beta, 1 beta' and 1 omega subunit. When a sigma factor is associated with the core the holoenzyme is formed, which can initiate transcription.</text>
</comment>
<comment type="domain">
    <text evidence="1">The N-terminal domain is essential for RNAP assembly and basal transcription, whereas the C-terminal domain is involved in interaction with transcriptional regulators and with upstream promoter elements.</text>
</comment>
<comment type="similarity">
    <text evidence="1">Belongs to the RNA polymerase alpha chain family.</text>
</comment>
<evidence type="ECO:0000255" key="1">
    <source>
        <dbReference type="HAMAP-Rule" id="MF_00059"/>
    </source>
</evidence>
<accession>Q3A9U4</accession>
<feature type="chain" id="PRO_0000225263" description="DNA-directed RNA polymerase subunit alpha">
    <location>
        <begin position="1"/>
        <end position="313"/>
    </location>
</feature>
<feature type="region of interest" description="Alpha N-terminal domain (alpha-NTD)" evidence="1">
    <location>
        <begin position="1"/>
        <end position="226"/>
    </location>
</feature>
<feature type="region of interest" description="Alpha C-terminal domain (alpha-CTD)" evidence="1">
    <location>
        <begin position="243"/>
        <end position="313"/>
    </location>
</feature>
<name>RPOA_CARHZ</name>
<organism>
    <name type="scientific">Carboxydothermus hydrogenoformans (strain ATCC BAA-161 / DSM 6008 / Z-2901)</name>
    <dbReference type="NCBI Taxonomy" id="246194"/>
    <lineage>
        <taxon>Bacteria</taxon>
        <taxon>Bacillati</taxon>
        <taxon>Bacillota</taxon>
        <taxon>Clostridia</taxon>
        <taxon>Thermoanaerobacterales</taxon>
        <taxon>Thermoanaerobacteraceae</taxon>
        <taxon>Carboxydothermus</taxon>
    </lineage>
</organism>
<keyword id="KW-0240">DNA-directed RNA polymerase</keyword>
<keyword id="KW-0548">Nucleotidyltransferase</keyword>
<keyword id="KW-1185">Reference proteome</keyword>
<keyword id="KW-0804">Transcription</keyword>
<keyword id="KW-0808">Transferase</keyword>
<sequence length="313" mass="34907">MLEIEKPKIETEELNDRYGRFVIEPLERGYGITLGNSMRRILLSSLPGAAVTSIKIEGVLHEFSTVPGVVEDVTEIILNIKNLTLKLHGDEEQVLRIEAEGEGVITAKDIIAPPEVEILNPDLVIAHIAEGGRLFMEMTVARGRGYVPAERNKKGEHVIGVIPVDSIFSPVLKVNFQVENTRVGQITDYDKLTLEVWTDGSIRPDEAVSLAARIMVEHLQLFVNLNERATGVEIMVEKEEDAKEKLAEMPIEDLDLSVRSYNCLKRAGINTVGELIQKTEADMMKVRNLGKKSLEEVISKLNSMGLSLRKEEE</sequence>
<dbReference type="EC" id="2.7.7.6" evidence="1"/>
<dbReference type="EMBL" id="CP000141">
    <property type="protein sequence ID" value="ABB15056.1"/>
    <property type="molecule type" value="Genomic_DNA"/>
</dbReference>
<dbReference type="RefSeq" id="WP_011345163.1">
    <property type="nucleotide sequence ID" value="NC_007503.1"/>
</dbReference>
<dbReference type="SMR" id="Q3A9U4"/>
<dbReference type="FunCoup" id="Q3A9U4">
    <property type="interactions" value="400"/>
</dbReference>
<dbReference type="STRING" id="246194.CHY_2281"/>
<dbReference type="KEGG" id="chy:CHY_2281"/>
<dbReference type="eggNOG" id="COG0202">
    <property type="taxonomic scope" value="Bacteria"/>
</dbReference>
<dbReference type="HOGENOM" id="CLU_053084_0_1_9"/>
<dbReference type="InParanoid" id="Q3A9U4"/>
<dbReference type="OrthoDB" id="9805706at2"/>
<dbReference type="Proteomes" id="UP000002706">
    <property type="component" value="Chromosome"/>
</dbReference>
<dbReference type="GO" id="GO:0005737">
    <property type="term" value="C:cytoplasm"/>
    <property type="evidence" value="ECO:0007669"/>
    <property type="project" value="UniProtKB-ARBA"/>
</dbReference>
<dbReference type="GO" id="GO:0000428">
    <property type="term" value="C:DNA-directed RNA polymerase complex"/>
    <property type="evidence" value="ECO:0007669"/>
    <property type="project" value="UniProtKB-KW"/>
</dbReference>
<dbReference type="GO" id="GO:0003677">
    <property type="term" value="F:DNA binding"/>
    <property type="evidence" value="ECO:0007669"/>
    <property type="project" value="UniProtKB-UniRule"/>
</dbReference>
<dbReference type="GO" id="GO:0003899">
    <property type="term" value="F:DNA-directed RNA polymerase activity"/>
    <property type="evidence" value="ECO:0007669"/>
    <property type="project" value="UniProtKB-UniRule"/>
</dbReference>
<dbReference type="GO" id="GO:0046983">
    <property type="term" value="F:protein dimerization activity"/>
    <property type="evidence" value="ECO:0007669"/>
    <property type="project" value="InterPro"/>
</dbReference>
<dbReference type="GO" id="GO:0006351">
    <property type="term" value="P:DNA-templated transcription"/>
    <property type="evidence" value="ECO:0007669"/>
    <property type="project" value="UniProtKB-UniRule"/>
</dbReference>
<dbReference type="CDD" id="cd06928">
    <property type="entry name" value="RNAP_alpha_NTD"/>
    <property type="match status" value="1"/>
</dbReference>
<dbReference type="FunFam" id="1.10.150.20:FF:000001">
    <property type="entry name" value="DNA-directed RNA polymerase subunit alpha"/>
    <property type="match status" value="1"/>
</dbReference>
<dbReference type="FunFam" id="2.170.120.12:FF:000001">
    <property type="entry name" value="DNA-directed RNA polymerase subunit alpha"/>
    <property type="match status" value="1"/>
</dbReference>
<dbReference type="Gene3D" id="1.10.150.20">
    <property type="entry name" value="5' to 3' exonuclease, C-terminal subdomain"/>
    <property type="match status" value="1"/>
</dbReference>
<dbReference type="Gene3D" id="2.170.120.12">
    <property type="entry name" value="DNA-directed RNA polymerase, insert domain"/>
    <property type="match status" value="1"/>
</dbReference>
<dbReference type="Gene3D" id="3.30.1360.10">
    <property type="entry name" value="RNA polymerase, RBP11-like subunit"/>
    <property type="match status" value="1"/>
</dbReference>
<dbReference type="HAMAP" id="MF_00059">
    <property type="entry name" value="RNApol_bact_RpoA"/>
    <property type="match status" value="1"/>
</dbReference>
<dbReference type="InterPro" id="IPR011262">
    <property type="entry name" value="DNA-dir_RNA_pol_insert"/>
</dbReference>
<dbReference type="InterPro" id="IPR011263">
    <property type="entry name" value="DNA-dir_RNA_pol_RpoA/D/Rpb3"/>
</dbReference>
<dbReference type="InterPro" id="IPR011773">
    <property type="entry name" value="DNA-dir_RpoA"/>
</dbReference>
<dbReference type="InterPro" id="IPR036603">
    <property type="entry name" value="RBP11-like"/>
</dbReference>
<dbReference type="InterPro" id="IPR011260">
    <property type="entry name" value="RNAP_asu_C"/>
</dbReference>
<dbReference type="InterPro" id="IPR036643">
    <property type="entry name" value="RNApol_insert_sf"/>
</dbReference>
<dbReference type="NCBIfam" id="NF003513">
    <property type="entry name" value="PRK05182.1-2"/>
    <property type="match status" value="1"/>
</dbReference>
<dbReference type="NCBIfam" id="NF003515">
    <property type="entry name" value="PRK05182.2-1"/>
    <property type="match status" value="1"/>
</dbReference>
<dbReference type="NCBIfam" id="NF003516">
    <property type="entry name" value="PRK05182.2-2"/>
    <property type="match status" value="1"/>
</dbReference>
<dbReference type="NCBIfam" id="NF003519">
    <property type="entry name" value="PRK05182.2-5"/>
    <property type="match status" value="1"/>
</dbReference>
<dbReference type="NCBIfam" id="TIGR02027">
    <property type="entry name" value="rpoA"/>
    <property type="match status" value="1"/>
</dbReference>
<dbReference type="Pfam" id="PF01000">
    <property type="entry name" value="RNA_pol_A_bac"/>
    <property type="match status" value="1"/>
</dbReference>
<dbReference type="Pfam" id="PF03118">
    <property type="entry name" value="RNA_pol_A_CTD"/>
    <property type="match status" value="1"/>
</dbReference>
<dbReference type="Pfam" id="PF01193">
    <property type="entry name" value="RNA_pol_L"/>
    <property type="match status" value="1"/>
</dbReference>
<dbReference type="SMART" id="SM00662">
    <property type="entry name" value="RPOLD"/>
    <property type="match status" value="1"/>
</dbReference>
<dbReference type="SUPFAM" id="SSF47789">
    <property type="entry name" value="C-terminal domain of RNA polymerase alpha subunit"/>
    <property type="match status" value="1"/>
</dbReference>
<dbReference type="SUPFAM" id="SSF56553">
    <property type="entry name" value="Insert subdomain of RNA polymerase alpha subunit"/>
    <property type="match status" value="1"/>
</dbReference>
<dbReference type="SUPFAM" id="SSF55257">
    <property type="entry name" value="RBP11-like subunits of RNA polymerase"/>
    <property type="match status" value="1"/>
</dbReference>
<reference key="1">
    <citation type="journal article" date="2005" name="PLoS Genet.">
        <title>Life in hot carbon monoxide: the complete genome sequence of Carboxydothermus hydrogenoformans Z-2901.</title>
        <authorList>
            <person name="Wu M."/>
            <person name="Ren Q."/>
            <person name="Durkin A.S."/>
            <person name="Daugherty S.C."/>
            <person name="Brinkac L.M."/>
            <person name="Dodson R.J."/>
            <person name="Madupu R."/>
            <person name="Sullivan S.A."/>
            <person name="Kolonay J.F."/>
            <person name="Nelson W.C."/>
            <person name="Tallon L.J."/>
            <person name="Jones K.M."/>
            <person name="Ulrich L.E."/>
            <person name="Gonzalez J.M."/>
            <person name="Zhulin I.B."/>
            <person name="Robb F.T."/>
            <person name="Eisen J.A."/>
        </authorList>
    </citation>
    <scope>NUCLEOTIDE SEQUENCE [LARGE SCALE GENOMIC DNA]</scope>
    <source>
        <strain>ATCC BAA-161 / DSM 6008 / Z-2901</strain>
    </source>
</reference>
<gene>
    <name evidence="1" type="primary">rpoA</name>
    <name type="ordered locus">CHY_2281</name>
</gene>